<reference key="1">
    <citation type="journal article" date="2011" name="J. Bacteriol.">
        <title>Comparative genomics of 28 Salmonella enterica isolates: evidence for CRISPR-mediated adaptive sublineage evolution.</title>
        <authorList>
            <person name="Fricke W.F."/>
            <person name="Mammel M.K."/>
            <person name="McDermott P.F."/>
            <person name="Tartera C."/>
            <person name="White D.G."/>
            <person name="Leclerc J.E."/>
            <person name="Ravel J."/>
            <person name="Cebula T.A."/>
        </authorList>
    </citation>
    <scope>NUCLEOTIDE SEQUENCE [LARGE SCALE GENOMIC DNA]</scope>
    <source>
        <strain>SL483</strain>
    </source>
</reference>
<evidence type="ECO:0000255" key="1">
    <source>
        <dbReference type="HAMAP-Rule" id="MF_01628"/>
    </source>
</evidence>
<gene>
    <name evidence="1" type="primary">deoA</name>
    <name type="ordered locus">SeAg_B4890</name>
</gene>
<organism>
    <name type="scientific">Salmonella agona (strain SL483)</name>
    <dbReference type="NCBI Taxonomy" id="454166"/>
    <lineage>
        <taxon>Bacteria</taxon>
        <taxon>Pseudomonadati</taxon>
        <taxon>Pseudomonadota</taxon>
        <taxon>Gammaproteobacteria</taxon>
        <taxon>Enterobacterales</taxon>
        <taxon>Enterobacteriaceae</taxon>
        <taxon>Salmonella</taxon>
    </lineage>
</organism>
<proteinExistence type="inferred from homology"/>
<comment type="function">
    <text evidence="1">The enzymes which catalyze the reversible phosphorolysis of pyrimidine nucleosides are involved in the degradation of these compounds and in their utilization as carbon and energy sources, or in the rescue of pyrimidine bases for nucleotide synthesis.</text>
</comment>
<comment type="catalytic activity">
    <reaction evidence="1">
        <text>thymidine + phosphate = 2-deoxy-alpha-D-ribose 1-phosphate + thymine</text>
        <dbReference type="Rhea" id="RHEA:16037"/>
        <dbReference type="ChEBI" id="CHEBI:17748"/>
        <dbReference type="ChEBI" id="CHEBI:17821"/>
        <dbReference type="ChEBI" id="CHEBI:43474"/>
        <dbReference type="ChEBI" id="CHEBI:57259"/>
        <dbReference type="EC" id="2.4.2.4"/>
    </reaction>
</comment>
<comment type="pathway">
    <text evidence="1">Pyrimidine metabolism; dTMP biosynthesis via salvage pathway; dTMP from thymine: step 1/2.</text>
</comment>
<comment type="subunit">
    <text evidence="1">Homodimer.</text>
</comment>
<comment type="similarity">
    <text evidence="1">Belongs to the thymidine/pyrimidine-nucleoside phosphorylase family.</text>
</comment>
<keyword id="KW-0328">Glycosyltransferase</keyword>
<keyword id="KW-0808">Transferase</keyword>
<sequence length="440" mass="47032">MFLAQEIIRKKRDGHALSDEEIRFFINGIRDNTISEGQIAALAMTIFFHDMTMPERVSLTMAMRDSGTVLDWKSLNLNGPIVDKHSTGGVGDVTSLMLGPMVAACGGYVPMISGRGLGHTGGTLDKLEAIPGFDIFPDDNRFREIIQDVGVAIIGQTSSLAPADKRFYATRDITATVDSIPLITGSILAKKLAEGLDALVMDVKVGSGAFMPTYELSEALAEAIVGVANGAGVRTTALLTDMNQVLASSAGNAVEVREAVQFLTGEYRNPRLFDVTMALCVEMLISGQLAKDDAEARAKLQAVLDNGKAAEVFGRMVAAQKGPSDFVENYDKYLPTAMLSKAVYADTEGFISAMDTRALGMAVVSMGGGRRQASDTIDYSVGFTDMARLGDSIDGQRPLAVIHAKDETSWQEAAKAVKAAIILDDKAPASTPSVYRRITE</sequence>
<accession>B5F525</accession>
<feature type="chain" id="PRO_1000186265" description="Thymidine phosphorylase">
    <location>
        <begin position="1"/>
        <end position="440"/>
    </location>
</feature>
<protein>
    <recommendedName>
        <fullName evidence="1">Thymidine phosphorylase</fullName>
        <ecNumber evidence="1">2.4.2.4</ecNumber>
    </recommendedName>
    <alternativeName>
        <fullName evidence="1">TdRPase</fullName>
    </alternativeName>
</protein>
<name>TYPH_SALA4</name>
<dbReference type="EC" id="2.4.2.4" evidence="1"/>
<dbReference type="EMBL" id="CP001138">
    <property type="protein sequence ID" value="ACH52500.1"/>
    <property type="molecule type" value="Genomic_DNA"/>
</dbReference>
<dbReference type="RefSeq" id="WP_000477840.1">
    <property type="nucleotide sequence ID" value="NC_011149.1"/>
</dbReference>
<dbReference type="SMR" id="B5F525"/>
<dbReference type="KEGG" id="sea:SeAg_B4890"/>
<dbReference type="HOGENOM" id="CLU_025040_0_1_6"/>
<dbReference type="UniPathway" id="UPA00578">
    <property type="reaction ID" value="UER00638"/>
</dbReference>
<dbReference type="Proteomes" id="UP000008819">
    <property type="component" value="Chromosome"/>
</dbReference>
<dbReference type="GO" id="GO:0005829">
    <property type="term" value="C:cytosol"/>
    <property type="evidence" value="ECO:0007669"/>
    <property type="project" value="TreeGrafter"/>
</dbReference>
<dbReference type="GO" id="GO:0004645">
    <property type="term" value="F:1,4-alpha-oligoglucan phosphorylase activity"/>
    <property type="evidence" value="ECO:0007669"/>
    <property type="project" value="InterPro"/>
</dbReference>
<dbReference type="GO" id="GO:0009032">
    <property type="term" value="F:thymidine phosphorylase activity"/>
    <property type="evidence" value="ECO:0007669"/>
    <property type="project" value="UniProtKB-UniRule"/>
</dbReference>
<dbReference type="GO" id="GO:0006206">
    <property type="term" value="P:pyrimidine nucleobase metabolic process"/>
    <property type="evidence" value="ECO:0007669"/>
    <property type="project" value="InterPro"/>
</dbReference>
<dbReference type="GO" id="GO:0046104">
    <property type="term" value="P:thymidine metabolic process"/>
    <property type="evidence" value="ECO:0007669"/>
    <property type="project" value="UniProtKB-UniRule"/>
</dbReference>
<dbReference type="FunFam" id="3.40.1030.10:FF:000001">
    <property type="entry name" value="Thymidine phosphorylase"/>
    <property type="match status" value="1"/>
</dbReference>
<dbReference type="FunFam" id="3.90.1170.30:FF:000001">
    <property type="entry name" value="Thymidine phosphorylase"/>
    <property type="match status" value="1"/>
</dbReference>
<dbReference type="Gene3D" id="3.40.1030.10">
    <property type="entry name" value="Nucleoside phosphorylase/phosphoribosyltransferase catalytic domain"/>
    <property type="match status" value="1"/>
</dbReference>
<dbReference type="Gene3D" id="3.90.1170.30">
    <property type="entry name" value="Pyrimidine nucleoside phosphorylase-like, C-terminal domain"/>
    <property type="match status" value="1"/>
</dbReference>
<dbReference type="Gene3D" id="1.20.970.10">
    <property type="entry name" value="Transferase, Pyrimidine Nucleoside Phosphorylase, Chain C"/>
    <property type="match status" value="1"/>
</dbReference>
<dbReference type="HAMAP" id="MF_01628">
    <property type="entry name" value="Thymid_phosp"/>
    <property type="match status" value="1"/>
</dbReference>
<dbReference type="InterPro" id="IPR000312">
    <property type="entry name" value="Glycosyl_Trfase_fam3"/>
</dbReference>
<dbReference type="InterPro" id="IPR017459">
    <property type="entry name" value="Glycosyl_Trfase_fam3_N_dom"/>
</dbReference>
<dbReference type="InterPro" id="IPR036320">
    <property type="entry name" value="Glycosyl_Trfase_fam3_N_dom_sf"/>
</dbReference>
<dbReference type="InterPro" id="IPR035902">
    <property type="entry name" value="Nuc_phospho_transferase"/>
</dbReference>
<dbReference type="InterPro" id="IPR036566">
    <property type="entry name" value="PYNP-like_C_sf"/>
</dbReference>
<dbReference type="InterPro" id="IPR013102">
    <property type="entry name" value="PYNP_C"/>
</dbReference>
<dbReference type="InterPro" id="IPR018090">
    <property type="entry name" value="Pyrmidine_PPas_bac/euk"/>
</dbReference>
<dbReference type="InterPro" id="IPR017872">
    <property type="entry name" value="Pyrmidine_PPase_CS"/>
</dbReference>
<dbReference type="InterPro" id="IPR000053">
    <property type="entry name" value="Thymidine/pyrmidine_PPase"/>
</dbReference>
<dbReference type="InterPro" id="IPR013465">
    <property type="entry name" value="Thymidine_Pase"/>
</dbReference>
<dbReference type="NCBIfam" id="NF004490">
    <property type="entry name" value="PRK05820.1"/>
    <property type="match status" value="1"/>
</dbReference>
<dbReference type="NCBIfam" id="TIGR02643">
    <property type="entry name" value="T_phosphoryl"/>
    <property type="match status" value="1"/>
</dbReference>
<dbReference type="NCBIfam" id="TIGR02644">
    <property type="entry name" value="Y_phosphoryl"/>
    <property type="match status" value="1"/>
</dbReference>
<dbReference type="PANTHER" id="PTHR10515">
    <property type="entry name" value="THYMIDINE PHOSPHORYLASE"/>
    <property type="match status" value="1"/>
</dbReference>
<dbReference type="PANTHER" id="PTHR10515:SF0">
    <property type="entry name" value="THYMIDINE PHOSPHORYLASE"/>
    <property type="match status" value="1"/>
</dbReference>
<dbReference type="Pfam" id="PF02885">
    <property type="entry name" value="Glycos_trans_3N"/>
    <property type="match status" value="1"/>
</dbReference>
<dbReference type="Pfam" id="PF00591">
    <property type="entry name" value="Glycos_transf_3"/>
    <property type="match status" value="1"/>
</dbReference>
<dbReference type="Pfam" id="PF07831">
    <property type="entry name" value="PYNP_C"/>
    <property type="match status" value="1"/>
</dbReference>
<dbReference type="PIRSF" id="PIRSF000478">
    <property type="entry name" value="TP_PyNP"/>
    <property type="match status" value="1"/>
</dbReference>
<dbReference type="SMART" id="SM00941">
    <property type="entry name" value="PYNP_C"/>
    <property type="match status" value="1"/>
</dbReference>
<dbReference type="SUPFAM" id="SSF52418">
    <property type="entry name" value="Nucleoside phosphorylase/phosphoribosyltransferase catalytic domain"/>
    <property type="match status" value="1"/>
</dbReference>
<dbReference type="SUPFAM" id="SSF47648">
    <property type="entry name" value="Nucleoside phosphorylase/phosphoribosyltransferase N-terminal domain"/>
    <property type="match status" value="1"/>
</dbReference>
<dbReference type="SUPFAM" id="SSF54680">
    <property type="entry name" value="Pyrimidine nucleoside phosphorylase C-terminal domain"/>
    <property type="match status" value="1"/>
</dbReference>
<dbReference type="PROSITE" id="PS00647">
    <property type="entry name" value="THYMID_PHOSPHORYLASE"/>
    <property type="match status" value="1"/>
</dbReference>